<sequence length="256" mass="28463">MKLYKYQGTGNDFIMIDNRLQIFPKQNTALIQKLCDRRFGIGADGLILLENDQSTDFKMVYYNSDGNQSTMCGNGGRCLVAFAKKLNIIKNKTTFIAIDGLHHATINENDIISLQMKNVEEVNIHDNYVFLNTGSPHHVQFADNLSNFDVKNEGAKIRYSDLYGQAGSNINFVHQTSPTQFSIRTYERGVEDETLSCGTGATATAIAMKATGKTNSNNITINVQGGKLEVSFNQENSIFTNIFLKGPAEFVFETTI</sequence>
<keyword id="KW-0028">Amino-acid biosynthesis</keyword>
<keyword id="KW-0963">Cytoplasm</keyword>
<keyword id="KW-0413">Isomerase</keyword>
<keyword id="KW-0457">Lysine biosynthesis</keyword>
<keyword id="KW-1185">Reference proteome</keyword>
<comment type="function">
    <text evidence="1">Catalyzes the stereoinversion of LL-2,6-diaminopimelate (L,L-DAP) to meso-diaminopimelate (meso-DAP), a precursor of L-lysine and an essential component of the bacterial peptidoglycan.</text>
</comment>
<comment type="catalytic activity">
    <reaction evidence="1">
        <text>(2S,6S)-2,6-diaminopimelate = meso-2,6-diaminopimelate</text>
        <dbReference type="Rhea" id="RHEA:15393"/>
        <dbReference type="ChEBI" id="CHEBI:57609"/>
        <dbReference type="ChEBI" id="CHEBI:57791"/>
        <dbReference type="EC" id="5.1.1.7"/>
    </reaction>
</comment>
<comment type="pathway">
    <text evidence="1">Amino-acid biosynthesis; L-lysine biosynthesis via DAP pathway; DL-2,6-diaminopimelate from LL-2,6-diaminopimelate: step 1/1.</text>
</comment>
<comment type="subunit">
    <text evidence="1">Homodimer.</text>
</comment>
<comment type="subcellular location">
    <subcellularLocation>
        <location evidence="1">Cytoplasm</location>
    </subcellularLocation>
</comment>
<comment type="similarity">
    <text evidence="1">Belongs to the diaminopimelate epimerase family.</text>
</comment>
<feature type="chain" id="PRO_1000099237" description="Diaminopimelate epimerase">
    <location>
        <begin position="1"/>
        <end position="256"/>
    </location>
</feature>
<feature type="active site" description="Proton donor" evidence="1">
    <location>
        <position position="72"/>
    </location>
</feature>
<feature type="active site" description="Proton acceptor" evidence="1">
    <location>
        <position position="197"/>
    </location>
</feature>
<feature type="binding site" evidence="1">
    <location>
        <position position="11"/>
    </location>
    <ligand>
        <name>substrate</name>
    </ligand>
</feature>
<feature type="binding site" evidence="1">
    <location>
        <position position="63"/>
    </location>
    <ligand>
        <name>substrate</name>
    </ligand>
</feature>
<feature type="binding site" evidence="1">
    <location>
        <begin position="73"/>
        <end position="74"/>
    </location>
    <ligand>
        <name>substrate</name>
    </ligand>
</feature>
<feature type="binding site" evidence="1">
    <location>
        <position position="169"/>
    </location>
    <ligand>
        <name>substrate</name>
    </ligand>
</feature>
<feature type="binding site" evidence="1">
    <location>
        <begin position="187"/>
        <end position="188"/>
    </location>
    <ligand>
        <name>substrate</name>
    </ligand>
</feature>
<feature type="binding site" evidence="1">
    <location>
        <begin position="198"/>
        <end position="199"/>
    </location>
    <ligand>
        <name>substrate</name>
    </ligand>
</feature>
<feature type="site" description="Could be important to modulate the pK values of the two catalytic cysteine residues" evidence="1">
    <location>
        <position position="137"/>
    </location>
</feature>
<feature type="site" description="Could be important to modulate the pK values of the two catalytic cysteine residues" evidence="1">
    <location>
        <position position="187"/>
    </location>
</feature>
<organism>
    <name type="scientific">Flavobacterium psychrophilum (strain ATCC 49511 / DSM 21280 / CIP 103535 / JIP02/86)</name>
    <dbReference type="NCBI Taxonomy" id="402612"/>
    <lineage>
        <taxon>Bacteria</taxon>
        <taxon>Pseudomonadati</taxon>
        <taxon>Bacteroidota</taxon>
        <taxon>Flavobacteriia</taxon>
        <taxon>Flavobacteriales</taxon>
        <taxon>Flavobacteriaceae</taxon>
        <taxon>Flavobacterium</taxon>
    </lineage>
</organism>
<protein>
    <recommendedName>
        <fullName evidence="1">Diaminopimelate epimerase</fullName>
        <shortName evidence="1">DAP epimerase</shortName>
        <ecNumber evidence="1">5.1.1.7</ecNumber>
    </recommendedName>
    <alternativeName>
        <fullName evidence="1">PLP-independent amino acid racemase</fullName>
    </alternativeName>
</protein>
<name>DAPF_FLAPJ</name>
<accession>A6GYX5</accession>
<gene>
    <name evidence="1" type="primary">dapF</name>
    <name type="ordered locus">FP1215</name>
</gene>
<evidence type="ECO:0000255" key="1">
    <source>
        <dbReference type="HAMAP-Rule" id="MF_00197"/>
    </source>
</evidence>
<proteinExistence type="inferred from homology"/>
<reference key="1">
    <citation type="journal article" date="2007" name="Nat. Biotechnol.">
        <title>Complete genome sequence of the fish pathogen Flavobacterium psychrophilum.</title>
        <authorList>
            <person name="Duchaud E."/>
            <person name="Boussaha M."/>
            <person name="Loux V."/>
            <person name="Bernardet J.-F."/>
            <person name="Michel C."/>
            <person name="Kerouault B."/>
            <person name="Mondot S."/>
            <person name="Nicolas P."/>
            <person name="Bossy R."/>
            <person name="Caron C."/>
            <person name="Bessieres P."/>
            <person name="Gibrat J.-F."/>
            <person name="Claverol S."/>
            <person name="Dumetz F."/>
            <person name="Le Henaff M."/>
            <person name="Benmansour A."/>
        </authorList>
    </citation>
    <scope>NUCLEOTIDE SEQUENCE [LARGE SCALE GENOMIC DNA]</scope>
    <source>
        <strain>ATCC 49511 / DSM 21280 / CIP 103535 / JIP02/86</strain>
    </source>
</reference>
<dbReference type="EC" id="5.1.1.7" evidence="1"/>
<dbReference type="EMBL" id="AM398681">
    <property type="protein sequence ID" value="CAL43298.1"/>
    <property type="molecule type" value="Genomic_DNA"/>
</dbReference>
<dbReference type="RefSeq" id="WP_011963347.1">
    <property type="nucleotide sequence ID" value="NC_009613.3"/>
</dbReference>
<dbReference type="RefSeq" id="YP_001296109.1">
    <property type="nucleotide sequence ID" value="NC_009613.3"/>
</dbReference>
<dbReference type="SMR" id="A6GYX5"/>
<dbReference type="STRING" id="402612.FP1215"/>
<dbReference type="EnsemblBacteria" id="CAL43298">
    <property type="protein sequence ID" value="CAL43298"/>
    <property type="gene ID" value="FP1215"/>
</dbReference>
<dbReference type="GeneID" id="66553119"/>
<dbReference type="KEGG" id="fps:FP1215"/>
<dbReference type="PATRIC" id="fig|402612.5.peg.1229"/>
<dbReference type="eggNOG" id="COG0253">
    <property type="taxonomic scope" value="Bacteria"/>
</dbReference>
<dbReference type="HOGENOM" id="CLU_053306_3_2_10"/>
<dbReference type="OrthoDB" id="9805408at2"/>
<dbReference type="UniPathway" id="UPA00034">
    <property type="reaction ID" value="UER00025"/>
</dbReference>
<dbReference type="Proteomes" id="UP000006394">
    <property type="component" value="Chromosome"/>
</dbReference>
<dbReference type="GO" id="GO:0005829">
    <property type="term" value="C:cytosol"/>
    <property type="evidence" value="ECO:0007669"/>
    <property type="project" value="TreeGrafter"/>
</dbReference>
<dbReference type="GO" id="GO:0008837">
    <property type="term" value="F:diaminopimelate epimerase activity"/>
    <property type="evidence" value="ECO:0007669"/>
    <property type="project" value="UniProtKB-UniRule"/>
</dbReference>
<dbReference type="GO" id="GO:0009089">
    <property type="term" value="P:lysine biosynthetic process via diaminopimelate"/>
    <property type="evidence" value="ECO:0007669"/>
    <property type="project" value="UniProtKB-UniRule"/>
</dbReference>
<dbReference type="Gene3D" id="3.10.310.10">
    <property type="entry name" value="Diaminopimelate Epimerase, Chain A, domain 1"/>
    <property type="match status" value="2"/>
</dbReference>
<dbReference type="HAMAP" id="MF_00197">
    <property type="entry name" value="DAP_epimerase"/>
    <property type="match status" value="1"/>
</dbReference>
<dbReference type="InterPro" id="IPR018510">
    <property type="entry name" value="DAP_epimerase_AS"/>
</dbReference>
<dbReference type="InterPro" id="IPR001653">
    <property type="entry name" value="DAP_epimerase_DapF"/>
</dbReference>
<dbReference type="NCBIfam" id="TIGR00652">
    <property type="entry name" value="DapF"/>
    <property type="match status" value="1"/>
</dbReference>
<dbReference type="PANTHER" id="PTHR31689:SF0">
    <property type="entry name" value="DIAMINOPIMELATE EPIMERASE"/>
    <property type="match status" value="1"/>
</dbReference>
<dbReference type="PANTHER" id="PTHR31689">
    <property type="entry name" value="DIAMINOPIMELATE EPIMERASE, CHLOROPLASTIC"/>
    <property type="match status" value="1"/>
</dbReference>
<dbReference type="Pfam" id="PF01678">
    <property type="entry name" value="DAP_epimerase"/>
    <property type="match status" value="2"/>
</dbReference>
<dbReference type="SUPFAM" id="SSF54506">
    <property type="entry name" value="Diaminopimelate epimerase-like"/>
    <property type="match status" value="2"/>
</dbReference>
<dbReference type="PROSITE" id="PS01326">
    <property type="entry name" value="DAP_EPIMERASE"/>
    <property type="match status" value="1"/>
</dbReference>